<keyword id="KW-0325">Glycoprotein</keyword>
<keyword id="KW-0472">Membrane</keyword>
<keyword id="KW-0597">Phosphoprotein</keyword>
<keyword id="KW-1267">Proteomics identification</keyword>
<keyword id="KW-1185">Reference proteome</keyword>
<keyword id="KW-0812">Transmembrane</keyword>
<keyword id="KW-1133">Transmembrane helix</keyword>
<comment type="interaction">
    <interactant intactId="EBI-11732844">
        <id>Q86VY9</id>
    </interactant>
    <interactant intactId="EBI-2126349">
        <id>Q9HD36</id>
        <label>BCL2L10</label>
    </interactant>
    <organismsDiffer>false</organismsDiffer>
    <experiments>3</experiments>
</comment>
<comment type="interaction">
    <interactant intactId="EBI-11732844">
        <id>Q86VY9</id>
    </interactant>
    <interactant intactId="EBI-489887">
        <id>P50402</id>
        <label>EMD</label>
    </interactant>
    <organismsDiffer>false</organismsDiffer>
    <experiments>3</experiments>
</comment>
<comment type="interaction">
    <interactant intactId="EBI-11732844">
        <id>Q86VY9</id>
    </interactant>
    <interactant intactId="EBI-711260">
        <id>Q13432</id>
        <label>UNC119</label>
    </interactant>
    <organismsDiffer>false</organismsDiffer>
    <experiments>3</experiments>
</comment>
<comment type="subcellular location">
    <subcellularLocation>
        <location evidence="4">Membrane</location>
        <topology evidence="4">Multi-pass membrane protein</topology>
    </subcellularLocation>
</comment>
<comment type="tissue specificity">
    <text evidence="3">Expressed in cerebellum.</text>
</comment>
<comment type="similarity">
    <text evidence="4">Belongs to the TMEM200 family.</text>
</comment>
<comment type="sequence caution" evidence="4">
    <conflict type="erroneous initiation">
        <sequence resource="EMBL-CDS" id="BAB67806"/>
    </conflict>
</comment>
<evidence type="ECO:0000255" key="1"/>
<evidence type="ECO:0000256" key="2">
    <source>
        <dbReference type="SAM" id="MobiDB-lite"/>
    </source>
</evidence>
<evidence type="ECO:0000269" key="3">
    <source>
    </source>
</evidence>
<evidence type="ECO:0000305" key="4"/>
<evidence type="ECO:0007744" key="5">
    <source>
    </source>
</evidence>
<feature type="chain" id="PRO_0000294340" description="Transmembrane protein 200A">
    <location>
        <begin position="1"/>
        <end position="491"/>
    </location>
</feature>
<feature type="topological domain" description="Cytoplasmic" evidence="1">
    <location>
        <begin position="1"/>
        <end position="61"/>
    </location>
</feature>
<feature type="transmembrane region" description="Helical" evidence="1">
    <location>
        <begin position="62"/>
        <end position="82"/>
    </location>
</feature>
<feature type="topological domain" description="Extracellular" evidence="1">
    <location>
        <begin position="83"/>
        <end position="126"/>
    </location>
</feature>
<feature type="transmembrane region" description="Helical" evidence="1">
    <location>
        <begin position="127"/>
        <end position="147"/>
    </location>
</feature>
<feature type="topological domain" description="Cytoplasmic" evidence="1">
    <location>
        <begin position="148"/>
        <end position="491"/>
    </location>
</feature>
<feature type="region of interest" description="Disordered" evidence="2">
    <location>
        <begin position="16"/>
        <end position="41"/>
    </location>
</feature>
<feature type="compositionally biased region" description="Polar residues" evidence="2">
    <location>
        <begin position="20"/>
        <end position="34"/>
    </location>
</feature>
<feature type="modified residue" description="Phosphoserine" evidence="5">
    <location>
        <position position="350"/>
    </location>
</feature>
<feature type="glycosylation site" description="N-linked (GlcNAc...) asparagine" evidence="1">
    <location>
        <position position="100"/>
    </location>
</feature>
<protein>
    <recommendedName>
        <fullName>Transmembrane protein 200A</fullName>
    </recommendedName>
</protein>
<dbReference type="EMBL" id="AB052099">
    <property type="protein sequence ID" value="BAD05135.1"/>
    <property type="molecule type" value="mRNA"/>
</dbReference>
<dbReference type="EMBL" id="AB067500">
    <property type="protein sequence ID" value="BAB67806.1"/>
    <property type="status" value="ALT_INIT"/>
    <property type="molecule type" value="mRNA"/>
</dbReference>
<dbReference type="EMBL" id="AL137251">
    <property type="status" value="NOT_ANNOTATED_CDS"/>
    <property type="molecule type" value="Genomic_DNA"/>
</dbReference>
<dbReference type="EMBL" id="BC044246">
    <property type="protein sequence ID" value="AAH44246.1"/>
    <property type="molecule type" value="mRNA"/>
</dbReference>
<dbReference type="CCDS" id="CCDS5140.1"/>
<dbReference type="RefSeq" id="NP_001245205.1">
    <property type="nucleotide sequence ID" value="NM_001258276.2"/>
</dbReference>
<dbReference type="RefSeq" id="NP_001245206.1">
    <property type="nucleotide sequence ID" value="NM_001258277.2"/>
</dbReference>
<dbReference type="RefSeq" id="NP_001245207.1">
    <property type="nucleotide sequence ID" value="NM_001258278.2"/>
</dbReference>
<dbReference type="RefSeq" id="NP_443145.1">
    <property type="nucleotide sequence ID" value="NM_052913.3"/>
</dbReference>
<dbReference type="RefSeq" id="XP_005266873.1">
    <property type="nucleotide sequence ID" value="XM_005266816.4"/>
</dbReference>
<dbReference type="RefSeq" id="XP_011533721.1">
    <property type="nucleotide sequence ID" value="XM_011535419.2"/>
</dbReference>
<dbReference type="RefSeq" id="XP_016865719.1">
    <property type="nucleotide sequence ID" value="XM_017010230.3"/>
</dbReference>
<dbReference type="RefSeq" id="XP_047274107.1">
    <property type="nucleotide sequence ID" value="XM_047418151.1"/>
</dbReference>
<dbReference type="RefSeq" id="XP_047274108.1">
    <property type="nucleotide sequence ID" value="XM_047418152.1"/>
</dbReference>
<dbReference type="RefSeq" id="XP_047274109.1">
    <property type="nucleotide sequence ID" value="XM_047418153.1"/>
</dbReference>
<dbReference type="RefSeq" id="XP_047274110.1">
    <property type="nucleotide sequence ID" value="XM_047418154.1"/>
</dbReference>
<dbReference type="RefSeq" id="XP_047274111.1">
    <property type="nucleotide sequence ID" value="XM_047418155.1"/>
</dbReference>
<dbReference type="RefSeq" id="XP_054210141.1">
    <property type="nucleotide sequence ID" value="XM_054354166.1"/>
</dbReference>
<dbReference type="RefSeq" id="XP_054210142.1">
    <property type="nucleotide sequence ID" value="XM_054354167.1"/>
</dbReference>
<dbReference type="RefSeq" id="XP_054210143.1">
    <property type="nucleotide sequence ID" value="XM_054354168.1"/>
</dbReference>
<dbReference type="RefSeq" id="XP_054210144.1">
    <property type="nucleotide sequence ID" value="XM_054354169.1"/>
</dbReference>
<dbReference type="RefSeq" id="XP_054210145.1">
    <property type="nucleotide sequence ID" value="XM_054354170.1"/>
</dbReference>
<dbReference type="RefSeq" id="XP_054210146.1">
    <property type="nucleotide sequence ID" value="XM_054354171.1"/>
</dbReference>
<dbReference type="RefSeq" id="XP_054210147.1">
    <property type="nucleotide sequence ID" value="XM_054354172.1"/>
</dbReference>
<dbReference type="SMR" id="Q86VY9"/>
<dbReference type="BioGRID" id="125362">
    <property type="interactions" value="49"/>
</dbReference>
<dbReference type="FunCoup" id="Q86VY9">
    <property type="interactions" value="171"/>
</dbReference>
<dbReference type="IntAct" id="Q86VY9">
    <property type="interactions" value="37"/>
</dbReference>
<dbReference type="MINT" id="Q86VY9"/>
<dbReference type="STRING" id="9606.ENSP00000376224"/>
<dbReference type="GlyCosmos" id="Q86VY9">
    <property type="glycosylation" value="1 site, No reported glycans"/>
</dbReference>
<dbReference type="GlyGen" id="Q86VY9">
    <property type="glycosylation" value="1 site"/>
</dbReference>
<dbReference type="iPTMnet" id="Q86VY9"/>
<dbReference type="PhosphoSitePlus" id="Q86VY9"/>
<dbReference type="BioMuta" id="TMEM200A"/>
<dbReference type="DMDM" id="74750476"/>
<dbReference type="jPOST" id="Q86VY9"/>
<dbReference type="MassIVE" id="Q86VY9"/>
<dbReference type="PaxDb" id="9606-ENSP00000376224"/>
<dbReference type="PeptideAtlas" id="Q86VY9"/>
<dbReference type="ProteomicsDB" id="70091"/>
<dbReference type="Antibodypedia" id="3039">
    <property type="antibodies" value="74 antibodies from 16 providers"/>
</dbReference>
<dbReference type="DNASU" id="114801"/>
<dbReference type="Ensembl" id="ENST00000296978.4">
    <property type="protein sequence ID" value="ENSP00000296978.3"/>
    <property type="gene ID" value="ENSG00000164484.12"/>
</dbReference>
<dbReference type="Ensembl" id="ENST00000392429.1">
    <property type="protein sequence ID" value="ENSP00000376224.1"/>
    <property type="gene ID" value="ENSG00000164484.12"/>
</dbReference>
<dbReference type="Ensembl" id="ENST00000545622.5">
    <property type="protein sequence ID" value="ENSP00000438928.1"/>
    <property type="gene ID" value="ENSG00000164484.12"/>
</dbReference>
<dbReference type="Ensembl" id="ENST00000617887.4">
    <property type="protein sequence ID" value="ENSP00000480294.1"/>
    <property type="gene ID" value="ENSG00000164484.12"/>
</dbReference>
<dbReference type="GeneID" id="114801"/>
<dbReference type="KEGG" id="hsa:114801"/>
<dbReference type="MANE-Select" id="ENST00000296978.4">
    <property type="protein sequence ID" value="ENSP00000296978.3"/>
    <property type="RefSeq nucleotide sequence ID" value="NM_001258277.2"/>
    <property type="RefSeq protein sequence ID" value="NP_001245206.1"/>
</dbReference>
<dbReference type="UCSC" id="uc003qca.5">
    <property type="organism name" value="human"/>
</dbReference>
<dbReference type="AGR" id="HGNC:21075"/>
<dbReference type="CTD" id="114801"/>
<dbReference type="DisGeNET" id="114801"/>
<dbReference type="GeneCards" id="TMEM200A"/>
<dbReference type="HGNC" id="HGNC:21075">
    <property type="gene designation" value="TMEM200A"/>
</dbReference>
<dbReference type="HPA" id="ENSG00000164484">
    <property type="expression patterns" value="Tissue enhanced (endometrium)"/>
</dbReference>
<dbReference type="neXtProt" id="NX_Q86VY9"/>
<dbReference type="OpenTargets" id="ENSG00000164484"/>
<dbReference type="PharmGKB" id="PA162406349"/>
<dbReference type="VEuPathDB" id="HostDB:ENSG00000164484"/>
<dbReference type="eggNOG" id="KOG4823">
    <property type="taxonomic scope" value="Eukaryota"/>
</dbReference>
<dbReference type="GeneTree" id="ENSGT00530000063698"/>
<dbReference type="HOGENOM" id="CLU_030031_0_0_1"/>
<dbReference type="InParanoid" id="Q86VY9"/>
<dbReference type="OMA" id="FQPVSTM"/>
<dbReference type="OrthoDB" id="9994280at2759"/>
<dbReference type="PAN-GO" id="Q86VY9">
    <property type="GO annotations" value="0 GO annotations based on evolutionary models"/>
</dbReference>
<dbReference type="PhylomeDB" id="Q86VY9"/>
<dbReference type="TreeFam" id="TF332635"/>
<dbReference type="PathwayCommons" id="Q86VY9"/>
<dbReference type="SignaLink" id="Q86VY9"/>
<dbReference type="BioGRID-ORCS" id="114801">
    <property type="hits" value="10 hits in 1141 CRISPR screens"/>
</dbReference>
<dbReference type="ChiTaRS" id="TMEM200A">
    <property type="organism name" value="human"/>
</dbReference>
<dbReference type="GenomeRNAi" id="114801"/>
<dbReference type="Pharos" id="Q86VY9">
    <property type="development level" value="Tbio"/>
</dbReference>
<dbReference type="PRO" id="PR:Q86VY9"/>
<dbReference type="Proteomes" id="UP000005640">
    <property type="component" value="Chromosome 6"/>
</dbReference>
<dbReference type="RNAct" id="Q86VY9">
    <property type="molecule type" value="protein"/>
</dbReference>
<dbReference type="Bgee" id="ENSG00000164484">
    <property type="expression patterns" value="Expressed in secondary oocyte and 149 other cell types or tissues"/>
</dbReference>
<dbReference type="ExpressionAtlas" id="Q86VY9">
    <property type="expression patterns" value="baseline and differential"/>
</dbReference>
<dbReference type="GO" id="GO:0016020">
    <property type="term" value="C:membrane"/>
    <property type="evidence" value="ECO:0007669"/>
    <property type="project" value="UniProtKB-SubCell"/>
</dbReference>
<dbReference type="InterPro" id="IPR018787">
    <property type="entry name" value="DUF2371_TMEM200"/>
</dbReference>
<dbReference type="PANTHER" id="PTHR31815">
    <property type="entry name" value="AGAP005329-PA"/>
    <property type="match status" value="1"/>
</dbReference>
<dbReference type="PANTHER" id="PTHR31815:SF0">
    <property type="entry name" value="TRANSMEMBRANE PROTEIN 200A"/>
    <property type="match status" value="1"/>
</dbReference>
<dbReference type="Pfam" id="PF10177">
    <property type="entry name" value="DUF2371"/>
    <property type="match status" value="1"/>
</dbReference>
<name>T200A_HUMAN</name>
<accession>Q86VY9</accession>
<accession>Q96PX5</accession>
<organism>
    <name type="scientific">Homo sapiens</name>
    <name type="common">Human</name>
    <dbReference type="NCBI Taxonomy" id="9606"/>
    <lineage>
        <taxon>Eukaryota</taxon>
        <taxon>Metazoa</taxon>
        <taxon>Chordata</taxon>
        <taxon>Craniata</taxon>
        <taxon>Vertebrata</taxon>
        <taxon>Euteleostomi</taxon>
        <taxon>Mammalia</taxon>
        <taxon>Eutheria</taxon>
        <taxon>Euarchontoglires</taxon>
        <taxon>Primates</taxon>
        <taxon>Haplorrhini</taxon>
        <taxon>Catarrhini</taxon>
        <taxon>Hominidae</taxon>
        <taxon>Homo</taxon>
    </lineage>
</organism>
<gene>
    <name type="primary">TMEM200A</name>
    <name type="synonym">KIAA1913</name>
    <name type="ORF">HBE61</name>
</gene>
<sequence>MIATGGVITGLAALKRQDSARSQQHVNLSPSPATQEKKPIRRRPRADVVVVRGKIRLYSPSGFFLILGVLISIIGIAMAVLGYWPQKEHFIDAETTLSTNETQVIRNEGGVVVRFFEQHLHSDKMKMLGPFTMGIGIFIFICANAILHENRDKETKIIHMRDIYSTVIDIHTLRIKEQRQMNGMYTGLMGETEVKQNGSSCASRLAANTIASFSGFRSSFRMDSSVEEDELMLNEGKSSGHLMPPLLSDSSVSVFGLYPPPSKTTDDKTSGSKKCETKSIVSSSISAFTLPVIKLNNCVIDEPSIDNITEDADNLKSRSRNLSMDSLVVPLPNTSESFQPVSTVLPRNNSIGESLSSQYKSSMALGPGAGQLLSPGAARRQFGSNTSLHLLSSHSKSLDLDRGPSTLTVQAEQRKHPSWPRLDRNNSKGYMKLENKEDPMDRLLVPQVAIKKDFTNKEKLLMISRSHNNLSFEHDEFLSNNLKRGTSETRF</sequence>
<proteinExistence type="evidence at protein level"/>
<reference key="1">
    <citation type="submission" date="2000-12" db="EMBL/GenBank/DDBJ databases">
        <title>A novel gene from human brain endothelial cell PCR select library.</title>
        <authorList>
            <person name="Yonezawa T."/>
            <person name="Ninomiya Y."/>
        </authorList>
    </citation>
    <scope>NUCLEOTIDE SEQUENCE [MRNA]</scope>
    <source>
        <tissue>Brain endothelium</tissue>
    </source>
</reference>
<reference key="2">
    <citation type="journal article" date="2001" name="DNA Res.">
        <title>Prediction of the coding sequences of unidentified human genes. XXI. The complete sequences of 60 new cDNA clones from brain which code for large proteins.</title>
        <authorList>
            <person name="Nagase T."/>
            <person name="Kikuno R."/>
            <person name="Ohara O."/>
        </authorList>
    </citation>
    <scope>NUCLEOTIDE SEQUENCE [LARGE SCALE MRNA]</scope>
    <source>
        <tissue>Brain</tissue>
    </source>
</reference>
<reference key="3">
    <citation type="journal article" date="2003" name="Nature">
        <title>The DNA sequence and analysis of human chromosome 6.</title>
        <authorList>
            <person name="Mungall A.J."/>
            <person name="Palmer S.A."/>
            <person name="Sims S.K."/>
            <person name="Edwards C.A."/>
            <person name="Ashurst J.L."/>
            <person name="Wilming L."/>
            <person name="Jones M.C."/>
            <person name="Horton R."/>
            <person name="Hunt S.E."/>
            <person name="Scott C.E."/>
            <person name="Gilbert J.G.R."/>
            <person name="Clamp M.E."/>
            <person name="Bethel G."/>
            <person name="Milne S."/>
            <person name="Ainscough R."/>
            <person name="Almeida J.P."/>
            <person name="Ambrose K.D."/>
            <person name="Andrews T.D."/>
            <person name="Ashwell R.I.S."/>
            <person name="Babbage A.K."/>
            <person name="Bagguley C.L."/>
            <person name="Bailey J."/>
            <person name="Banerjee R."/>
            <person name="Barker D.J."/>
            <person name="Barlow K.F."/>
            <person name="Bates K."/>
            <person name="Beare D.M."/>
            <person name="Beasley H."/>
            <person name="Beasley O."/>
            <person name="Bird C.P."/>
            <person name="Blakey S.E."/>
            <person name="Bray-Allen S."/>
            <person name="Brook J."/>
            <person name="Brown A.J."/>
            <person name="Brown J.Y."/>
            <person name="Burford D.C."/>
            <person name="Burrill W."/>
            <person name="Burton J."/>
            <person name="Carder C."/>
            <person name="Carter N.P."/>
            <person name="Chapman J.C."/>
            <person name="Clark S.Y."/>
            <person name="Clark G."/>
            <person name="Clee C.M."/>
            <person name="Clegg S."/>
            <person name="Cobley V."/>
            <person name="Collier R.E."/>
            <person name="Collins J.E."/>
            <person name="Colman L.K."/>
            <person name="Corby N.R."/>
            <person name="Coville G.J."/>
            <person name="Culley K.M."/>
            <person name="Dhami P."/>
            <person name="Davies J."/>
            <person name="Dunn M."/>
            <person name="Earthrowl M.E."/>
            <person name="Ellington A.E."/>
            <person name="Evans K.A."/>
            <person name="Faulkner L."/>
            <person name="Francis M.D."/>
            <person name="Frankish A."/>
            <person name="Frankland J."/>
            <person name="French L."/>
            <person name="Garner P."/>
            <person name="Garnett J."/>
            <person name="Ghori M.J."/>
            <person name="Gilby L.M."/>
            <person name="Gillson C.J."/>
            <person name="Glithero R.J."/>
            <person name="Grafham D.V."/>
            <person name="Grant M."/>
            <person name="Gribble S."/>
            <person name="Griffiths C."/>
            <person name="Griffiths M.N.D."/>
            <person name="Hall R."/>
            <person name="Halls K.S."/>
            <person name="Hammond S."/>
            <person name="Harley J.L."/>
            <person name="Hart E.A."/>
            <person name="Heath P.D."/>
            <person name="Heathcott R."/>
            <person name="Holmes S.J."/>
            <person name="Howden P.J."/>
            <person name="Howe K.L."/>
            <person name="Howell G.R."/>
            <person name="Huckle E."/>
            <person name="Humphray S.J."/>
            <person name="Humphries M.D."/>
            <person name="Hunt A.R."/>
            <person name="Johnson C.M."/>
            <person name="Joy A.A."/>
            <person name="Kay M."/>
            <person name="Keenan S.J."/>
            <person name="Kimberley A.M."/>
            <person name="King A."/>
            <person name="Laird G.K."/>
            <person name="Langford C."/>
            <person name="Lawlor S."/>
            <person name="Leongamornlert D.A."/>
            <person name="Leversha M."/>
            <person name="Lloyd C.R."/>
            <person name="Lloyd D.M."/>
            <person name="Loveland J.E."/>
            <person name="Lovell J."/>
            <person name="Martin S."/>
            <person name="Mashreghi-Mohammadi M."/>
            <person name="Maslen G.L."/>
            <person name="Matthews L."/>
            <person name="McCann O.T."/>
            <person name="McLaren S.J."/>
            <person name="McLay K."/>
            <person name="McMurray A."/>
            <person name="Moore M.J.F."/>
            <person name="Mullikin J.C."/>
            <person name="Niblett D."/>
            <person name="Nickerson T."/>
            <person name="Novik K.L."/>
            <person name="Oliver K."/>
            <person name="Overton-Larty E.K."/>
            <person name="Parker A."/>
            <person name="Patel R."/>
            <person name="Pearce A.V."/>
            <person name="Peck A.I."/>
            <person name="Phillimore B.J.C.T."/>
            <person name="Phillips S."/>
            <person name="Plumb R.W."/>
            <person name="Porter K.M."/>
            <person name="Ramsey Y."/>
            <person name="Ranby S.A."/>
            <person name="Rice C.M."/>
            <person name="Ross M.T."/>
            <person name="Searle S.M."/>
            <person name="Sehra H.K."/>
            <person name="Sheridan E."/>
            <person name="Skuce C.D."/>
            <person name="Smith S."/>
            <person name="Smith M."/>
            <person name="Spraggon L."/>
            <person name="Squares S.L."/>
            <person name="Steward C.A."/>
            <person name="Sycamore N."/>
            <person name="Tamlyn-Hall G."/>
            <person name="Tester J."/>
            <person name="Theaker A.J."/>
            <person name="Thomas D.W."/>
            <person name="Thorpe A."/>
            <person name="Tracey A."/>
            <person name="Tromans A."/>
            <person name="Tubby B."/>
            <person name="Wall M."/>
            <person name="Wallis J.M."/>
            <person name="West A.P."/>
            <person name="White S.S."/>
            <person name="Whitehead S.L."/>
            <person name="Whittaker H."/>
            <person name="Wild A."/>
            <person name="Willey D.J."/>
            <person name="Wilmer T.E."/>
            <person name="Wood J.M."/>
            <person name="Wray P.W."/>
            <person name="Wyatt J.C."/>
            <person name="Young L."/>
            <person name="Younger R.M."/>
            <person name="Bentley D.R."/>
            <person name="Coulson A."/>
            <person name="Durbin R.M."/>
            <person name="Hubbard T."/>
            <person name="Sulston J.E."/>
            <person name="Dunham I."/>
            <person name="Rogers J."/>
            <person name="Beck S."/>
        </authorList>
    </citation>
    <scope>NUCLEOTIDE SEQUENCE [LARGE SCALE GENOMIC DNA]</scope>
</reference>
<reference key="4">
    <citation type="journal article" date="2004" name="Genome Res.">
        <title>The status, quality, and expansion of the NIH full-length cDNA project: the Mammalian Gene Collection (MGC).</title>
        <authorList>
            <consortium name="The MGC Project Team"/>
        </authorList>
    </citation>
    <scope>NUCLEOTIDE SEQUENCE [LARGE SCALE MRNA]</scope>
    <source>
        <tissue>Colon</tissue>
    </source>
</reference>
<reference key="5">
    <citation type="journal article" date="2005" name="Clin. Cancer Res.">
        <title>Identification of a novel homozygous deletion region at 6q23.1 in medulloblastomas using high-resolution array comparative genomic hybridization analysis.</title>
        <authorList>
            <person name="Hui A.B.Y."/>
            <person name="Takano H."/>
            <person name="Lo K.-W."/>
            <person name="Kuo W.-L."/>
            <person name="Lam C.N.Y."/>
            <person name="Tong C.Y.K."/>
            <person name="Chang Q."/>
            <person name="Gray J.W."/>
            <person name="Ng H.-K."/>
        </authorList>
    </citation>
    <scope>TISSUE SPECIFICITY</scope>
</reference>
<reference key="6">
    <citation type="journal article" date="2011" name="Sci. Signal.">
        <title>System-wide temporal characterization of the proteome and phosphoproteome of human embryonic stem cell differentiation.</title>
        <authorList>
            <person name="Rigbolt K.T."/>
            <person name="Prokhorova T.A."/>
            <person name="Akimov V."/>
            <person name="Henningsen J."/>
            <person name="Johansen P.T."/>
            <person name="Kratchmarova I."/>
            <person name="Kassem M."/>
            <person name="Mann M."/>
            <person name="Olsen J.V."/>
            <person name="Blagoev B."/>
        </authorList>
    </citation>
    <scope>PHOSPHORYLATION [LARGE SCALE ANALYSIS] AT SER-350</scope>
    <scope>IDENTIFICATION BY MASS SPECTROMETRY [LARGE SCALE ANALYSIS]</scope>
</reference>